<evidence type="ECO:0000255" key="1">
    <source>
        <dbReference type="HAMAP-Rule" id="MF_00817"/>
    </source>
</evidence>
<sequence length="281" mass="32285">MTKYTNADELKSLTLGQKTEYKHSYEPELLQAVPRSLNRDDLALGDELPFVGCDVWTLYELSWLNQNGLPQVAIGDVVLPATSPNLVESKSFKLYLNSFNQTKFSSWEDVTSTLIKDLSVCAGEEVMVNIHPVQAYSQQPIVDMQGECIDNQDIVIDSYEFDANYLESSTSEKMVNEVLHSHLLKSNCLITNQPDWGSVEINYEGNKIDHEKLLRYLISFRQHNEFHEQCVERIYTDIMKFCSPKSLTVFARYTRRGGLDINPFRSSHLIKPEHNLRLARQ</sequence>
<gene>
    <name evidence="1" type="primary">queF</name>
    <name type="ordered locus">VSAL_I0698</name>
</gene>
<reference key="1">
    <citation type="journal article" date="2008" name="BMC Genomics">
        <title>The genome sequence of the fish pathogen Aliivibrio salmonicida strain LFI1238 shows extensive evidence of gene decay.</title>
        <authorList>
            <person name="Hjerde E."/>
            <person name="Lorentzen M.S."/>
            <person name="Holden M.T."/>
            <person name="Seeger K."/>
            <person name="Paulsen S."/>
            <person name="Bason N."/>
            <person name="Churcher C."/>
            <person name="Harris D."/>
            <person name="Norbertczak H."/>
            <person name="Quail M.A."/>
            <person name="Sanders S."/>
            <person name="Thurston S."/>
            <person name="Parkhill J."/>
            <person name="Willassen N.P."/>
            <person name="Thomson N.R."/>
        </authorList>
    </citation>
    <scope>NUCLEOTIDE SEQUENCE [LARGE SCALE GENOMIC DNA]</scope>
    <source>
        <strain>LFI1238</strain>
    </source>
</reference>
<dbReference type="EC" id="1.7.1.13" evidence="1"/>
<dbReference type="EMBL" id="FM178379">
    <property type="protein sequence ID" value="CAQ78383.1"/>
    <property type="molecule type" value="Genomic_DNA"/>
</dbReference>
<dbReference type="RefSeq" id="WP_012549503.1">
    <property type="nucleotide sequence ID" value="NC_011312.1"/>
</dbReference>
<dbReference type="SMR" id="B6EGG7"/>
<dbReference type="KEGG" id="vsa:VSAL_I0698"/>
<dbReference type="eggNOG" id="COG0780">
    <property type="taxonomic scope" value="Bacteria"/>
</dbReference>
<dbReference type="eggNOG" id="COG2904">
    <property type="taxonomic scope" value="Bacteria"/>
</dbReference>
<dbReference type="HOGENOM" id="CLU_054738_0_0_6"/>
<dbReference type="UniPathway" id="UPA00392"/>
<dbReference type="Proteomes" id="UP000001730">
    <property type="component" value="Chromosome 1"/>
</dbReference>
<dbReference type="GO" id="GO:0005737">
    <property type="term" value="C:cytoplasm"/>
    <property type="evidence" value="ECO:0007669"/>
    <property type="project" value="UniProtKB-SubCell"/>
</dbReference>
<dbReference type="GO" id="GO:0033739">
    <property type="term" value="F:preQ1 synthase activity"/>
    <property type="evidence" value="ECO:0007669"/>
    <property type="project" value="UniProtKB-UniRule"/>
</dbReference>
<dbReference type="GO" id="GO:0008616">
    <property type="term" value="P:queuosine biosynthetic process"/>
    <property type="evidence" value="ECO:0007669"/>
    <property type="project" value="UniProtKB-UniRule"/>
</dbReference>
<dbReference type="GO" id="GO:0006400">
    <property type="term" value="P:tRNA modification"/>
    <property type="evidence" value="ECO:0007669"/>
    <property type="project" value="UniProtKB-UniRule"/>
</dbReference>
<dbReference type="Gene3D" id="3.30.1130.10">
    <property type="match status" value="2"/>
</dbReference>
<dbReference type="HAMAP" id="MF_00817">
    <property type="entry name" value="QueF_type2"/>
    <property type="match status" value="1"/>
</dbReference>
<dbReference type="InterPro" id="IPR043133">
    <property type="entry name" value="GTP-CH-I_C/QueF"/>
</dbReference>
<dbReference type="InterPro" id="IPR050084">
    <property type="entry name" value="NADPH_dep_7-cyano-7-deazaG_red"/>
</dbReference>
<dbReference type="InterPro" id="IPR029500">
    <property type="entry name" value="QueF"/>
</dbReference>
<dbReference type="InterPro" id="IPR029139">
    <property type="entry name" value="QueF_N"/>
</dbReference>
<dbReference type="InterPro" id="IPR016428">
    <property type="entry name" value="QueF_type2"/>
</dbReference>
<dbReference type="NCBIfam" id="TIGR03138">
    <property type="entry name" value="QueF"/>
    <property type="match status" value="1"/>
</dbReference>
<dbReference type="PANTHER" id="PTHR34354">
    <property type="entry name" value="NADPH-DEPENDENT 7-CYANO-7-DEAZAGUANINE REDUCTASE"/>
    <property type="match status" value="1"/>
</dbReference>
<dbReference type="PANTHER" id="PTHR34354:SF1">
    <property type="entry name" value="NADPH-DEPENDENT 7-CYANO-7-DEAZAGUANINE REDUCTASE"/>
    <property type="match status" value="1"/>
</dbReference>
<dbReference type="Pfam" id="PF14489">
    <property type="entry name" value="QueF"/>
    <property type="match status" value="1"/>
</dbReference>
<dbReference type="Pfam" id="PF14819">
    <property type="entry name" value="QueF_N"/>
    <property type="match status" value="1"/>
</dbReference>
<dbReference type="PIRSF" id="PIRSF004750">
    <property type="entry name" value="Nitrile_oxidored_YqcD_prd"/>
    <property type="match status" value="1"/>
</dbReference>
<dbReference type="SUPFAM" id="SSF55620">
    <property type="entry name" value="Tetrahydrobiopterin biosynthesis enzymes-like"/>
    <property type="match status" value="1"/>
</dbReference>
<proteinExistence type="inferred from homology"/>
<keyword id="KW-0963">Cytoplasm</keyword>
<keyword id="KW-0521">NADP</keyword>
<keyword id="KW-0560">Oxidoreductase</keyword>
<keyword id="KW-0671">Queuosine biosynthesis</keyword>
<accession>B6EGG7</accession>
<comment type="function">
    <text evidence="1">Catalyzes the NADPH-dependent reduction of 7-cyano-7-deazaguanine (preQ0) to 7-aminomethyl-7-deazaguanine (preQ1).</text>
</comment>
<comment type="catalytic activity">
    <reaction evidence="1">
        <text>7-aminomethyl-7-carbaguanine + 2 NADP(+) = 7-cyano-7-deazaguanine + 2 NADPH + 3 H(+)</text>
        <dbReference type="Rhea" id="RHEA:13409"/>
        <dbReference type="ChEBI" id="CHEBI:15378"/>
        <dbReference type="ChEBI" id="CHEBI:45075"/>
        <dbReference type="ChEBI" id="CHEBI:57783"/>
        <dbReference type="ChEBI" id="CHEBI:58349"/>
        <dbReference type="ChEBI" id="CHEBI:58703"/>
        <dbReference type="EC" id="1.7.1.13"/>
    </reaction>
</comment>
<comment type="pathway">
    <text evidence="1">tRNA modification; tRNA-queuosine biosynthesis.</text>
</comment>
<comment type="subunit">
    <text evidence="1">Homodimer.</text>
</comment>
<comment type="subcellular location">
    <subcellularLocation>
        <location evidence="1">Cytoplasm</location>
    </subcellularLocation>
</comment>
<comment type="similarity">
    <text evidence="1">Belongs to the GTP cyclohydrolase I family. QueF type 2 subfamily.</text>
</comment>
<name>QUEF_ALISL</name>
<organism>
    <name type="scientific">Aliivibrio salmonicida (strain LFI1238)</name>
    <name type="common">Vibrio salmonicida (strain LFI1238)</name>
    <dbReference type="NCBI Taxonomy" id="316275"/>
    <lineage>
        <taxon>Bacteria</taxon>
        <taxon>Pseudomonadati</taxon>
        <taxon>Pseudomonadota</taxon>
        <taxon>Gammaproteobacteria</taxon>
        <taxon>Vibrionales</taxon>
        <taxon>Vibrionaceae</taxon>
        <taxon>Aliivibrio</taxon>
    </lineage>
</organism>
<feature type="chain" id="PRO_1000193212" description="NADPH-dependent 7-cyano-7-deazaguanine reductase">
    <location>
        <begin position="1"/>
        <end position="281"/>
    </location>
</feature>
<feature type="active site" description="Thioimide intermediate" evidence="1">
    <location>
        <position position="188"/>
    </location>
</feature>
<feature type="active site" description="Proton donor" evidence="1">
    <location>
        <position position="195"/>
    </location>
</feature>
<feature type="binding site" evidence="1">
    <location>
        <begin position="87"/>
        <end position="89"/>
    </location>
    <ligand>
        <name>substrate</name>
    </ligand>
</feature>
<feature type="binding site" evidence="1">
    <location>
        <begin position="89"/>
        <end position="90"/>
    </location>
    <ligand>
        <name>NADPH</name>
        <dbReference type="ChEBI" id="CHEBI:57783"/>
    </ligand>
</feature>
<feature type="binding site" evidence="1">
    <location>
        <begin position="227"/>
        <end position="228"/>
    </location>
    <ligand>
        <name>substrate</name>
    </ligand>
</feature>
<feature type="binding site" evidence="1">
    <location>
        <begin position="256"/>
        <end position="257"/>
    </location>
    <ligand>
        <name>NADPH</name>
        <dbReference type="ChEBI" id="CHEBI:57783"/>
    </ligand>
</feature>
<protein>
    <recommendedName>
        <fullName evidence="1">NADPH-dependent 7-cyano-7-deazaguanine reductase</fullName>
        <ecNumber evidence="1">1.7.1.13</ecNumber>
    </recommendedName>
    <alternativeName>
        <fullName evidence="1">7-cyano-7-carbaguanine reductase</fullName>
    </alternativeName>
    <alternativeName>
        <fullName evidence="1">NADPH-dependent nitrile oxidoreductase</fullName>
    </alternativeName>
    <alternativeName>
        <fullName evidence="1">PreQ(0) reductase</fullName>
    </alternativeName>
</protein>